<evidence type="ECO:0000255" key="1">
    <source>
        <dbReference type="HAMAP-Rule" id="MF_01121"/>
    </source>
</evidence>
<evidence type="ECO:0000255" key="2">
    <source>
        <dbReference type="PROSITE-ProRule" id="PRU00236"/>
    </source>
</evidence>
<organism>
    <name type="scientific">Aquifex aeolicus (strain VF5)</name>
    <dbReference type="NCBI Taxonomy" id="224324"/>
    <lineage>
        <taxon>Bacteria</taxon>
        <taxon>Pseudomonadati</taxon>
        <taxon>Aquificota</taxon>
        <taxon>Aquificia</taxon>
        <taxon>Aquificales</taxon>
        <taxon>Aquificaceae</taxon>
        <taxon>Aquifex</taxon>
    </lineage>
</organism>
<proteinExistence type="inferred from homology"/>
<reference key="1">
    <citation type="journal article" date="1998" name="Nature">
        <title>The complete genome of the hyperthermophilic bacterium Aquifex aeolicus.</title>
        <authorList>
            <person name="Deckert G."/>
            <person name="Warren P.V."/>
            <person name="Gaasterland T."/>
            <person name="Young W.G."/>
            <person name="Lenox A.L."/>
            <person name="Graham D.E."/>
            <person name="Overbeek R."/>
            <person name="Snead M.A."/>
            <person name="Keller M."/>
            <person name="Aujay M."/>
            <person name="Huber R."/>
            <person name="Feldman R.A."/>
            <person name="Short J.M."/>
            <person name="Olsen G.J."/>
            <person name="Swanson R.V."/>
        </authorList>
    </citation>
    <scope>NUCLEOTIDE SEQUENCE [LARGE SCALE GENOMIC DNA]</scope>
    <source>
        <strain>VF5</strain>
    </source>
</reference>
<sequence>MENLNIVTLTGAGISAESGIPTFRGKDGLWNKFKPEELATPEAFFRNPKLVWEWYDWKRQLIAKAQPNEGHKILTKMEEEFPNFYLITQNVDGLHQRAGSKKVIELHGNIWKVRCVECGNERYEYTTPLPEIPPKCEKCGGLLRPGVVWFGESLPVDALSRAYELSREAHVFIVVGTSGVVYPAAELPFVAKENGAQVIEVNPEETPITKIADMHFKEKASTGLKKVYDYLREKYGSKG</sequence>
<dbReference type="EC" id="2.3.1.286" evidence="1 2"/>
<dbReference type="EMBL" id="AE000657">
    <property type="protein sequence ID" value="AAC07893.1"/>
    <property type="molecule type" value="Genomic_DNA"/>
</dbReference>
<dbReference type="PIR" id="C70486">
    <property type="entry name" value="C70486"/>
</dbReference>
<dbReference type="RefSeq" id="NP_214488.1">
    <property type="nucleotide sequence ID" value="NC_000918.1"/>
</dbReference>
<dbReference type="RefSeq" id="WP_010881424.1">
    <property type="nucleotide sequence ID" value="NC_000918.1"/>
</dbReference>
<dbReference type="SMR" id="O67919"/>
<dbReference type="FunCoup" id="O67919">
    <property type="interactions" value="316"/>
</dbReference>
<dbReference type="STRING" id="224324.aq_2170"/>
<dbReference type="EnsemblBacteria" id="AAC07893">
    <property type="protein sequence ID" value="AAC07893"/>
    <property type="gene ID" value="aq_2170"/>
</dbReference>
<dbReference type="KEGG" id="aae:aq_2170"/>
<dbReference type="PATRIC" id="fig|224324.8.peg.1677"/>
<dbReference type="eggNOG" id="COG0846">
    <property type="taxonomic scope" value="Bacteria"/>
</dbReference>
<dbReference type="HOGENOM" id="CLU_023643_3_1_0"/>
<dbReference type="InParanoid" id="O67919"/>
<dbReference type="OrthoDB" id="394960at2"/>
<dbReference type="Proteomes" id="UP000000798">
    <property type="component" value="Chromosome"/>
</dbReference>
<dbReference type="GO" id="GO:0005737">
    <property type="term" value="C:cytoplasm"/>
    <property type="evidence" value="ECO:0007669"/>
    <property type="project" value="UniProtKB-SubCell"/>
</dbReference>
<dbReference type="GO" id="GO:0017136">
    <property type="term" value="F:histone deacetylase activity, NAD-dependent"/>
    <property type="evidence" value="ECO:0000318"/>
    <property type="project" value="GO_Central"/>
</dbReference>
<dbReference type="GO" id="GO:0070403">
    <property type="term" value="F:NAD+ binding"/>
    <property type="evidence" value="ECO:0000318"/>
    <property type="project" value="GO_Central"/>
</dbReference>
<dbReference type="GO" id="GO:0036054">
    <property type="term" value="F:protein-malonyllysine demalonylase activity"/>
    <property type="evidence" value="ECO:0007669"/>
    <property type="project" value="InterPro"/>
</dbReference>
<dbReference type="GO" id="GO:0036055">
    <property type="term" value="F:protein-succinyllysine desuccinylase activity"/>
    <property type="evidence" value="ECO:0007669"/>
    <property type="project" value="InterPro"/>
</dbReference>
<dbReference type="GO" id="GO:0008270">
    <property type="term" value="F:zinc ion binding"/>
    <property type="evidence" value="ECO:0007669"/>
    <property type="project" value="UniProtKB-UniRule"/>
</dbReference>
<dbReference type="CDD" id="cd01412">
    <property type="entry name" value="SIRT5_Af1_CobB"/>
    <property type="match status" value="1"/>
</dbReference>
<dbReference type="Gene3D" id="3.30.1600.10">
    <property type="entry name" value="SIR2/SIRT2 'Small Domain"/>
    <property type="match status" value="1"/>
</dbReference>
<dbReference type="Gene3D" id="3.40.50.1220">
    <property type="entry name" value="TPP-binding domain"/>
    <property type="match status" value="1"/>
</dbReference>
<dbReference type="HAMAP" id="MF_01121">
    <property type="entry name" value="Sirtuin_ClassIII"/>
    <property type="match status" value="1"/>
</dbReference>
<dbReference type="InterPro" id="IPR029035">
    <property type="entry name" value="DHS-like_NAD/FAD-binding_dom"/>
</dbReference>
<dbReference type="InterPro" id="IPR050134">
    <property type="entry name" value="NAD-dep_sirtuin_deacylases"/>
</dbReference>
<dbReference type="InterPro" id="IPR003000">
    <property type="entry name" value="Sirtuin"/>
</dbReference>
<dbReference type="InterPro" id="IPR026591">
    <property type="entry name" value="Sirtuin_cat_small_dom_sf"/>
</dbReference>
<dbReference type="InterPro" id="IPR027546">
    <property type="entry name" value="Sirtuin_class_III"/>
</dbReference>
<dbReference type="InterPro" id="IPR026590">
    <property type="entry name" value="Ssirtuin_cat_dom"/>
</dbReference>
<dbReference type="NCBIfam" id="NF001753">
    <property type="entry name" value="PRK00481.1-3"/>
    <property type="match status" value="1"/>
</dbReference>
<dbReference type="PANTHER" id="PTHR11085:SF4">
    <property type="entry name" value="NAD-DEPENDENT PROTEIN DEACYLASE"/>
    <property type="match status" value="1"/>
</dbReference>
<dbReference type="PANTHER" id="PTHR11085">
    <property type="entry name" value="NAD-DEPENDENT PROTEIN DEACYLASE SIRTUIN-5, MITOCHONDRIAL-RELATED"/>
    <property type="match status" value="1"/>
</dbReference>
<dbReference type="Pfam" id="PF02146">
    <property type="entry name" value="SIR2"/>
    <property type="match status" value="1"/>
</dbReference>
<dbReference type="SUPFAM" id="SSF52467">
    <property type="entry name" value="DHS-like NAD/FAD-binding domain"/>
    <property type="match status" value="1"/>
</dbReference>
<dbReference type="PROSITE" id="PS50305">
    <property type="entry name" value="SIRTUIN"/>
    <property type="match status" value="1"/>
</dbReference>
<protein>
    <recommendedName>
        <fullName evidence="1">NAD-dependent protein deacylase</fullName>
        <ecNumber evidence="1 2">2.3.1.286</ecNumber>
    </recommendedName>
    <alternativeName>
        <fullName evidence="1">Regulatory protein SIR2 homolog</fullName>
    </alternativeName>
</protein>
<feature type="chain" id="PRO_0000110286" description="NAD-dependent protein deacylase">
    <location>
        <begin position="1"/>
        <end position="239"/>
    </location>
</feature>
<feature type="domain" description="Deacetylase sirtuin-type" evidence="2">
    <location>
        <begin position="1"/>
        <end position="234"/>
    </location>
</feature>
<feature type="active site" description="Proton acceptor" evidence="2">
    <location>
        <position position="107"/>
    </location>
</feature>
<feature type="binding site" evidence="1">
    <location>
        <begin position="11"/>
        <end position="30"/>
    </location>
    <ligand>
        <name>NAD(+)</name>
        <dbReference type="ChEBI" id="CHEBI:57540"/>
    </ligand>
</feature>
<feature type="binding site" evidence="1">
    <location>
        <begin position="89"/>
        <end position="92"/>
    </location>
    <ligand>
        <name>NAD(+)</name>
        <dbReference type="ChEBI" id="CHEBI:57540"/>
    </ligand>
</feature>
<feature type="binding site" evidence="1">
    <location>
        <position position="115"/>
    </location>
    <ligand>
        <name>Zn(2+)</name>
        <dbReference type="ChEBI" id="CHEBI:29105"/>
    </ligand>
</feature>
<feature type="binding site" evidence="1">
    <location>
        <position position="118"/>
    </location>
    <ligand>
        <name>Zn(2+)</name>
        <dbReference type="ChEBI" id="CHEBI:29105"/>
    </ligand>
</feature>
<feature type="binding site" evidence="1">
    <location>
        <position position="136"/>
    </location>
    <ligand>
        <name>Zn(2+)</name>
        <dbReference type="ChEBI" id="CHEBI:29105"/>
    </ligand>
</feature>
<feature type="binding site" evidence="1">
    <location>
        <position position="139"/>
    </location>
    <ligand>
        <name>Zn(2+)</name>
        <dbReference type="ChEBI" id="CHEBI:29105"/>
    </ligand>
</feature>
<feature type="binding site" evidence="1">
    <location>
        <begin position="176"/>
        <end position="178"/>
    </location>
    <ligand>
        <name>NAD(+)</name>
        <dbReference type="ChEBI" id="CHEBI:57540"/>
    </ligand>
</feature>
<feature type="binding site" evidence="1">
    <location>
        <begin position="202"/>
        <end position="204"/>
    </location>
    <ligand>
        <name>NAD(+)</name>
        <dbReference type="ChEBI" id="CHEBI:57540"/>
    </ligand>
</feature>
<feature type="binding site" evidence="1">
    <location>
        <position position="220"/>
    </location>
    <ligand>
        <name>NAD(+)</name>
        <dbReference type="ChEBI" id="CHEBI:57540"/>
    </ligand>
</feature>
<comment type="function">
    <text evidence="1">NAD-dependent protein deacetylase which modulates the activities of several proteins which are inactive in their acetylated form.</text>
</comment>
<comment type="catalytic activity">
    <reaction evidence="1">
        <text>N(6)-acetyl-L-lysyl-[protein] + NAD(+) + H2O = 2''-O-acetyl-ADP-D-ribose + nicotinamide + L-lysyl-[protein]</text>
        <dbReference type="Rhea" id="RHEA:43636"/>
        <dbReference type="Rhea" id="RHEA-COMP:9752"/>
        <dbReference type="Rhea" id="RHEA-COMP:10731"/>
        <dbReference type="ChEBI" id="CHEBI:15377"/>
        <dbReference type="ChEBI" id="CHEBI:17154"/>
        <dbReference type="ChEBI" id="CHEBI:29969"/>
        <dbReference type="ChEBI" id="CHEBI:57540"/>
        <dbReference type="ChEBI" id="CHEBI:61930"/>
        <dbReference type="ChEBI" id="CHEBI:83767"/>
        <dbReference type="EC" id="2.3.1.286"/>
    </reaction>
</comment>
<comment type="cofactor">
    <cofactor evidence="1">
        <name>Zn(2+)</name>
        <dbReference type="ChEBI" id="CHEBI:29105"/>
    </cofactor>
    <text evidence="1">Binds 1 zinc ion per subunit.</text>
</comment>
<comment type="subcellular location">
    <subcellularLocation>
        <location evidence="1">Cytoplasm</location>
    </subcellularLocation>
</comment>
<comment type="similarity">
    <text evidence="1">Belongs to the sirtuin family. Class III subfamily.</text>
</comment>
<name>NPD_AQUAE</name>
<accession>O67919</accession>
<gene>
    <name evidence="1" type="primary">cobB</name>
    <name type="ordered locus">aq_2170</name>
</gene>
<keyword id="KW-0963">Cytoplasm</keyword>
<keyword id="KW-0479">Metal-binding</keyword>
<keyword id="KW-0520">NAD</keyword>
<keyword id="KW-1185">Reference proteome</keyword>
<keyword id="KW-0808">Transferase</keyword>
<keyword id="KW-0862">Zinc</keyword>